<reference key="1">
    <citation type="journal article" date="2003" name="Nat. Biotechnol.">
        <title>The genome sequence of the entomopathogenic bacterium Photorhabdus luminescens.</title>
        <authorList>
            <person name="Duchaud E."/>
            <person name="Rusniok C."/>
            <person name="Frangeul L."/>
            <person name="Buchrieser C."/>
            <person name="Givaudan A."/>
            <person name="Taourit S."/>
            <person name="Bocs S."/>
            <person name="Boursaux-Eude C."/>
            <person name="Chandler M."/>
            <person name="Charles J.-F."/>
            <person name="Dassa E."/>
            <person name="Derose R."/>
            <person name="Derzelle S."/>
            <person name="Freyssinet G."/>
            <person name="Gaudriault S."/>
            <person name="Medigue C."/>
            <person name="Lanois A."/>
            <person name="Powell K."/>
            <person name="Siguier P."/>
            <person name="Vincent R."/>
            <person name="Wingate V."/>
            <person name="Zouine M."/>
            <person name="Glaser P."/>
            <person name="Boemare N."/>
            <person name="Danchin A."/>
            <person name="Kunst F."/>
        </authorList>
    </citation>
    <scope>NUCLEOTIDE SEQUENCE [LARGE SCALE GENOMIC DNA]</scope>
    <source>
        <strain>DSM 15139 / CIP 105565 / TT01</strain>
    </source>
</reference>
<sequence>MQKVVLATGNPGKVRELAQLLADFGLDIVAQTELGVDSAEETGLTFIENAILKARHAAQVTGLPAIADDSGLSVDILGGAPGIYSARYAGENATDQQNLEKLLDTMKDIPDDQRQAQFNCVLVYIRHAEDPTPLVFHGRWPGFIAHKSAGNGGFGYDPIFYIPELGCTAAELTGEQKNAVSHRGQALKMMLDTLRNA</sequence>
<dbReference type="EC" id="3.6.1.66" evidence="1"/>
<dbReference type="EMBL" id="BX571862">
    <property type="protein sequence ID" value="CAE13471.1"/>
    <property type="molecule type" value="Genomic_DNA"/>
</dbReference>
<dbReference type="RefSeq" id="WP_011145504.1">
    <property type="nucleotide sequence ID" value="NC_005126.1"/>
</dbReference>
<dbReference type="SMR" id="Q7N7H2"/>
<dbReference type="STRING" id="243265.plu1177"/>
<dbReference type="GeneID" id="48847447"/>
<dbReference type="KEGG" id="plu:plu1177"/>
<dbReference type="eggNOG" id="COG0127">
    <property type="taxonomic scope" value="Bacteria"/>
</dbReference>
<dbReference type="HOGENOM" id="CLU_082080_0_3_6"/>
<dbReference type="OrthoDB" id="9807456at2"/>
<dbReference type="Proteomes" id="UP000002514">
    <property type="component" value="Chromosome"/>
</dbReference>
<dbReference type="GO" id="GO:0005829">
    <property type="term" value="C:cytosol"/>
    <property type="evidence" value="ECO:0007669"/>
    <property type="project" value="TreeGrafter"/>
</dbReference>
<dbReference type="GO" id="GO:0035870">
    <property type="term" value="F:dITP diphosphatase activity"/>
    <property type="evidence" value="ECO:0007669"/>
    <property type="project" value="RHEA"/>
</dbReference>
<dbReference type="GO" id="GO:0036220">
    <property type="term" value="F:ITP diphosphatase activity"/>
    <property type="evidence" value="ECO:0007669"/>
    <property type="project" value="UniProtKB-EC"/>
</dbReference>
<dbReference type="GO" id="GO:0046872">
    <property type="term" value="F:metal ion binding"/>
    <property type="evidence" value="ECO:0007669"/>
    <property type="project" value="UniProtKB-KW"/>
</dbReference>
<dbReference type="GO" id="GO:0000166">
    <property type="term" value="F:nucleotide binding"/>
    <property type="evidence" value="ECO:0007669"/>
    <property type="project" value="UniProtKB-KW"/>
</dbReference>
<dbReference type="GO" id="GO:0017111">
    <property type="term" value="F:ribonucleoside triphosphate phosphatase activity"/>
    <property type="evidence" value="ECO:0007669"/>
    <property type="project" value="InterPro"/>
</dbReference>
<dbReference type="GO" id="GO:0036222">
    <property type="term" value="F:XTP diphosphatase activity"/>
    <property type="evidence" value="ECO:0007669"/>
    <property type="project" value="RHEA"/>
</dbReference>
<dbReference type="GO" id="GO:0009117">
    <property type="term" value="P:nucleotide metabolic process"/>
    <property type="evidence" value="ECO:0007669"/>
    <property type="project" value="UniProtKB-KW"/>
</dbReference>
<dbReference type="GO" id="GO:0009146">
    <property type="term" value="P:purine nucleoside triphosphate catabolic process"/>
    <property type="evidence" value="ECO:0007669"/>
    <property type="project" value="UniProtKB-UniRule"/>
</dbReference>
<dbReference type="CDD" id="cd00515">
    <property type="entry name" value="HAM1"/>
    <property type="match status" value="1"/>
</dbReference>
<dbReference type="FunFam" id="3.90.950.10:FF:000001">
    <property type="entry name" value="dITP/XTP pyrophosphatase"/>
    <property type="match status" value="1"/>
</dbReference>
<dbReference type="Gene3D" id="3.90.950.10">
    <property type="match status" value="1"/>
</dbReference>
<dbReference type="HAMAP" id="MF_01405">
    <property type="entry name" value="Non_canon_purine_NTPase"/>
    <property type="match status" value="1"/>
</dbReference>
<dbReference type="InterPro" id="IPR020922">
    <property type="entry name" value="dITP/XTP_pyrophosphatase"/>
</dbReference>
<dbReference type="InterPro" id="IPR029001">
    <property type="entry name" value="ITPase-like_fam"/>
</dbReference>
<dbReference type="InterPro" id="IPR002637">
    <property type="entry name" value="RdgB/HAM1"/>
</dbReference>
<dbReference type="NCBIfam" id="NF011397">
    <property type="entry name" value="PRK14822.1"/>
    <property type="match status" value="1"/>
</dbReference>
<dbReference type="NCBIfam" id="TIGR00042">
    <property type="entry name" value="RdgB/HAM1 family non-canonical purine NTP pyrophosphatase"/>
    <property type="match status" value="1"/>
</dbReference>
<dbReference type="PANTHER" id="PTHR11067:SF9">
    <property type="entry name" value="INOSINE TRIPHOSPHATE PYROPHOSPHATASE"/>
    <property type="match status" value="1"/>
</dbReference>
<dbReference type="PANTHER" id="PTHR11067">
    <property type="entry name" value="INOSINE TRIPHOSPHATE PYROPHOSPHATASE/HAM1 PROTEIN"/>
    <property type="match status" value="1"/>
</dbReference>
<dbReference type="Pfam" id="PF01725">
    <property type="entry name" value="Ham1p_like"/>
    <property type="match status" value="1"/>
</dbReference>
<dbReference type="SUPFAM" id="SSF52972">
    <property type="entry name" value="ITPase-like"/>
    <property type="match status" value="1"/>
</dbReference>
<organism>
    <name type="scientific">Photorhabdus laumondii subsp. laumondii (strain DSM 15139 / CIP 105565 / TT01)</name>
    <name type="common">Photorhabdus luminescens subsp. laumondii</name>
    <dbReference type="NCBI Taxonomy" id="243265"/>
    <lineage>
        <taxon>Bacteria</taxon>
        <taxon>Pseudomonadati</taxon>
        <taxon>Pseudomonadota</taxon>
        <taxon>Gammaproteobacteria</taxon>
        <taxon>Enterobacterales</taxon>
        <taxon>Morganellaceae</taxon>
        <taxon>Photorhabdus</taxon>
    </lineage>
</organism>
<name>IXTPA_PHOLL</name>
<evidence type="ECO:0000255" key="1">
    <source>
        <dbReference type="HAMAP-Rule" id="MF_01405"/>
    </source>
</evidence>
<accession>Q7N7H2</accession>
<comment type="function">
    <text evidence="1">Pyrophosphatase that catalyzes the hydrolysis of nucleoside triphosphates to their monophosphate derivatives, with a high preference for the non-canonical purine nucleotides XTP (xanthosine triphosphate), dITP (deoxyinosine triphosphate) and ITP. Seems to function as a house-cleaning enzyme that removes non-canonical purine nucleotides from the nucleotide pool, thus preventing their incorporation into DNA/RNA and avoiding chromosomal lesions.</text>
</comment>
<comment type="catalytic activity">
    <reaction evidence="1">
        <text>XTP + H2O = XMP + diphosphate + H(+)</text>
        <dbReference type="Rhea" id="RHEA:28610"/>
        <dbReference type="ChEBI" id="CHEBI:15377"/>
        <dbReference type="ChEBI" id="CHEBI:15378"/>
        <dbReference type="ChEBI" id="CHEBI:33019"/>
        <dbReference type="ChEBI" id="CHEBI:57464"/>
        <dbReference type="ChEBI" id="CHEBI:61314"/>
        <dbReference type="EC" id="3.6.1.66"/>
    </reaction>
</comment>
<comment type="catalytic activity">
    <reaction evidence="1">
        <text>dITP + H2O = dIMP + diphosphate + H(+)</text>
        <dbReference type="Rhea" id="RHEA:28342"/>
        <dbReference type="ChEBI" id="CHEBI:15377"/>
        <dbReference type="ChEBI" id="CHEBI:15378"/>
        <dbReference type="ChEBI" id="CHEBI:33019"/>
        <dbReference type="ChEBI" id="CHEBI:61194"/>
        <dbReference type="ChEBI" id="CHEBI:61382"/>
        <dbReference type="EC" id="3.6.1.66"/>
    </reaction>
</comment>
<comment type="catalytic activity">
    <reaction evidence="1">
        <text>ITP + H2O = IMP + diphosphate + H(+)</text>
        <dbReference type="Rhea" id="RHEA:29399"/>
        <dbReference type="ChEBI" id="CHEBI:15377"/>
        <dbReference type="ChEBI" id="CHEBI:15378"/>
        <dbReference type="ChEBI" id="CHEBI:33019"/>
        <dbReference type="ChEBI" id="CHEBI:58053"/>
        <dbReference type="ChEBI" id="CHEBI:61402"/>
        <dbReference type="EC" id="3.6.1.66"/>
    </reaction>
</comment>
<comment type="cofactor">
    <cofactor evidence="1">
        <name>Mg(2+)</name>
        <dbReference type="ChEBI" id="CHEBI:18420"/>
    </cofactor>
    <text evidence="1">Binds 1 Mg(2+) ion per subunit.</text>
</comment>
<comment type="subunit">
    <text evidence="1">Homodimer.</text>
</comment>
<comment type="similarity">
    <text evidence="1">Belongs to the HAM1 NTPase family.</text>
</comment>
<proteinExistence type="inferred from homology"/>
<protein>
    <recommendedName>
        <fullName evidence="1">dITP/XTP pyrophosphatase</fullName>
        <ecNumber evidence="1">3.6.1.66</ecNumber>
    </recommendedName>
    <alternativeName>
        <fullName evidence="1">Non-canonical purine NTP pyrophosphatase</fullName>
    </alternativeName>
    <alternativeName>
        <fullName evidence="1">Non-standard purine NTP pyrophosphatase</fullName>
    </alternativeName>
    <alternativeName>
        <fullName evidence="1">Nucleoside-triphosphate diphosphatase</fullName>
    </alternativeName>
    <alternativeName>
        <fullName evidence="1">Nucleoside-triphosphate pyrophosphatase</fullName>
        <shortName evidence="1">NTPase</shortName>
    </alternativeName>
</protein>
<feature type="chain" id="PRO_0000178206" description="dITP/XTP pyrophosphatase">
    <location>
        <begin position="1"/>
        <end position="197"/>
    </location>
</feature>
<feature type="active site" description="Proton acceptor" evidence="1">
    <location>
        <position position="69"/>
    </location>
</feature>
<feature type="binding site" evidence="1">
    <location>
        <begin position="8"/>
        <end position="13"/>
    </location>
    <ligand>
        <name>substrate</name>
    </ligand>
</feature>
<feature type="binding site" evidence="1">
    <location>
        <position position="40"/>
    </location>
    <ligand>
        <name>Mg(2+)</name>
        <dbReference type="ChEBI" id="CHEBI:18420"/>
    </ligand>
</feature>
<feature type="binding site" evidence="1">
    <location>
        <position position="69"/>
    </location>
    <ligand>
        <name>Mg(2+)</name>
        <dbReference type="ChEBI" id="CHEBI:18420"/>
    </ligand>
</feature>
<feature type="binding site" evidence="1">
    <location>
        <position position="70"/>
    </location>
    <ligand>
        <name>substrate</name>
    </ligand>
</feature>
<feature type="binding site" evidence="1">
    <location>
        <begin position="154"/>
        <end position="157"/>
    </location>
    <ligand>
        <name>substrate</name>
    </ligand>
</feature>
<feature type="binding site" evidence="1">
    <location>
        <position position="177"/>
    </location>
    <ligand>
        <name>substrate</name>
    </ligand>
</feature>
<feature type="binding site" evidence="1">
    <location>
        <begin position="182"/>
        <end position="183"/>
    </location>
    <ligand>
        <name>substrate</name>
    </ligand>
</feature>
<keyword id="KW-0378">Hydrolase</keyword>
<keyword id="KW-0460">Magnesium</keyword>
<keyword id="KW-0479">Metal-binding</keyword>
<keyword id="KW-0546">Nucleotide metabolism</keyword>
<keyword id="KW-0547">Nucleotide-binding</keyword>
<keyword id="KW-1185">Reference proteome</keyword>
<gene>
    <name type="ordered locus">plu1177</name>
</gene>